<protein>
    <recommendedName>
        <fullName>Serine carboxypeptidase 3</fullName>
        <ecNumber>3.4.16.5</ecNumber>
    </recommendedName>
    <alternativeName>
        <fullName>CP-MIII</fullName>
    </alternativeName>
    <alternativeName>
        <fullName>Serine carboxypeptidase III</fullName>
    </alternativeName>
</protein>
<feature type="signal peptide" evidence="2">
    <location>
        <begin position="1"/>
        <end position="19"/>
    </location>
</feature>
<feature type="propeptide" id="PRO_0000004324" evidence="6">
    <location>
        <begin position="20"/>
        <end position="80"/>
    </location>
</feature>
<feature type="chain" id="PRO_0000004325" description="Serine carboxypeptidase 3">
    <location>
        <begin position="81"/>
        <end position="491"/>
    </location>
</feature>
<feature type="propeptide" id="PRO_0000004326">
    <location>
        <begin position="492"/>
        <end position="508"/>
    </location>
</feature>
<feature type="region of interest" description="Disordered" evidence="5">
    <location>
        <begin position="48"/>
        <end position="67"/>
    </location>
</feature>
<feature type="active site" evidence="1">
    <location>
        <position position="223"/>
    </location>
</feature>
<feature type="active site" evidence="1">
    <location>
        <position position="411"/>
    </location>
</feature>
<feature type="active site" evidence="1">
    <location>
        <position position="468"/>
    </location>
</feature>
<feature type="binding site">
    <location>
        <position position="414"/>
    </location>
    <ligand>
        <name>substrate</name>
    </ligand>
</feature>
<feature type="modified residue" description="Blocked amino end (Leu)">
    <location>
        <position position="81"/>
    </location>
</feature>
<feature type="glycosylation site" description="N-linked (GlcNAc...) asparagine">
    <location>
        <position position="151"/>
    </location>
</feature>
<feature type="disulfide bond" evidence="1">
    <location>
        <begin position="133"/>
        <end position="373"/>
    </location>
</feature>
<feature type="disulfide bond" evidence="1">
    <location>
        <begin position="301"/>
        <end position="316"/>
    </location>
</feature>
<feature type="disulfide bond" evidence="1">
    <location>
        <begin position="339"/>
        <end position="344"/>
    </location>
</feature>
<feature type="sequence variant">
    <original>Q</original>
    <variation>V</variation>
    <location>
        <position position="265"/>
    </location>
</feature>
<keyword id="KW-0121">Carboxypeptidase</keyword>
<keyword id="KW-0903">Direct protein sequencing</keyword>
<keyword id="KW-1015">Disulfide bond</keyword>
<keyword id="KW-0325">Glycoprotein</keyword>
<keyword id="KW-0378">Hydrolase</keyword>
<keyword id="KW-0645">Protease</keyword>
<keyword id="KW-0964">Secreted</keyword>
<keyword id="KW-0732">Signal</keyword>
<keyword id="KW-0865">Zymogen</keyword>
<accession>P21529</accession>
<reference key="1">
    <citation type="submission" date="1996-12" db="EMBL/GenBank/DDBJ databases">
        <authorList>
            <person name="Rocher A."/>
            <person name="Lok F."/>
            <person name="Cameron-Mills V."/>
            <person name="von Wettstein D."/>
        </authorList>
    </citation>
    <scope>NUCLEOTIDE SEQUENCE [MRNA]</scope>
    <source>
        <strain>cv. Himalaya</strain>
        <tissue>Aleurone</tissue>
    </source>
</reference>
<reference key="2">
    <citation type="journal article" date="1989" name="Carlsberg Res. Commun.">
        <title>Primary structure of carboxypeptidase III from malted barley.</title>
        <authorList>
            <person name="Soerensen S.B."/>
            <person name="Svendsen I."/>
            <person name="Breddam K."/>
        </authorList>
    </citation>
    <scope>PROTEIN SEQUENCE OF 81-491</scope>
    <source>
        <strain>cv. Gula</strain>
    </source>
</reference>
<dbReference type="EC" id="3.4.16.5"/>
<dbReference type="EMBL" id="Y09604">
    <property type="protein sequence ID" value="CAA70817.1"/>
    <property type="molecule type" value="mRNA"/>
</dbReference>
<dbReference type="PIR" id="A35275">
    <property type="entry name" value="A35275"/>
</dbReference>
<dbReference type="SMR" id="P21529"/>
<dbReference type="ESTHER" id="horvu-cbp3">
    <property type="family name" value="Carboxypeptidase_S10"/>
</dbReference>
<dbReference type="MEROPS" id="S10.009"/>
<dbReference type="GlyCosmos" id="P21529">
    <property type="glycosylation" value="1 site, No reported glycans"/>
</dbReference>
<dbReference type="ExpressionAtlas" id="P21529">
    <property type="expression patterns" value="baseline and differential"/>
</dbReference>
<dbReference type="GO" id="GO:0005576">
    <property type="term" value="C:extracellular region"/>
    <property type="evidence" value="ECO:0007669"/>
    <property type="project" value="UniProtKB-SubCell"/>
</dbReference>
<dbReference type="GO" id="GO:0005773">
    <property type="term" value="C:vacuole"/>
    <property type="evidence" value="ECO:0007669"/>
    <property type="project" value="TreeGrafter"/>
</dbReference>
<dbReference type="GO" id="GO:0004185">
    <property type="term" value="F:serine-type carboxypeptidase activity"/>
    <property type="evidence" value="ECO:0007669"/>
    <property type="project" value="UniProtKB-EC"/>
</dbReference>
<dbReference type="GO" id="GO:0006508">
    <property type="term" value="P:proteolysis"/>
    <property type="evidence" value="ECO:0007669"/>
    <property type="project" value="UniProtKB-KW"/>
</dbReference>
<dbReference type="FunFam" id="3.40.50.1820:FF:000060">
    <property type="entry name" value="Carboxypeptidase"/>
    <property type="match status" value="1"/>
</dbReference>
<dbReference type="Gene3D" id="3.40.50.1820">
    <property type="entry name" value="alpha/beta hydrolase"/>
    <property type="match status" value="1"/>
</dbReference>
<dbReference type="InterPro" id="IPR029058">
    <property type="entry name" value="AB_hydrolase_fold"/>
</dbReference>
<dbReference type="InterPro" id="IPR001563">
    <property type="entry name" value="Peptidase_S10"/>
</dbReference>
<dbReference type="InterPro" id="IPR033124">
    <property type="entry name" value="Ser_caboxypep_his_AS"/>
</dbReference>
<dbReference type="InterPro" id="IPR018202">
    <property type="entry name" value="Ser_caboxypep_ser_AS"/>
</dbReference>
<dbReference type="PANTHER" id="PTHR11802:SF259">
    <property type="entry name" value="SERINE CARBOXYPEPTIDASE-LIKE 48"/>
    <property type="match status" value="1"/>
</dbReference>
<dbReference type="PANTHER" id="PTHR11802">
    <property type="entry name" value="SERINE PROTEASE FAMILY S10 SERINE CARBOXYPEPTIDASE"/>
    <property type="match status" value="1"/>
</dbReference>
<dbReference type="Pfam" id="PF00450">
    <property type="entry name" value="Peptidase_S10"/>
    <property type="match status" value="1"/>
</dbReference>
<dbReference type="PRINTS" id="PR00724">
    <property type="entry name" value="CRBOXYPTASEC"/>
</dbReference>
<dbReference type="SUPFAM" id="SSF53474">
    <property type="entry name" value="alpha/beta-Hydrolases"/>
    <property type="match status" value="1"/>
</dbReference>
<dbReference type="PROSITE" id="PS00560">
    <property type="entry name" value="CARBOXYPEPT_SER_HIS"/>
    <property type="match status" value="1"/>
</dbReference>
<dbReference type="PROSITE" id="PS00131">
    <property type="entry name" value="CARBOXYPEPT_SER_SER"/>
    <property type="match status" value="1"/>
</dbReference>
<organism>
    <name type="scientific">Hordeum vulgare</name>
    <name type="common">Barley</name>
    <dbReference type="NCBI Taxonomy" id="4513"/>
    <lineage>
        <taxon>Eukaryota</taxon>
        <taxon>Viridiplantae</taxon>
        <taxon>Streptophyta</taxon>
        <taxon>Embryophyta</taxon>
        <taxon>Tracheophyta</taxon>
        <taxon>Spermatophyta</taxon>
        <taxon>Magnoliopsida</taxon>
        <taxon>Liliopsida</taxon>
        <taxon>Poales</taxon>
        <taxon>Poaceae</taxon>
        <taxon>BOP clade</taxon>
        <taxon>Pooideae</taxon>
        <taxon>Triticodae</taxon>
        <taxon>Triticeae</taxon>
        <taxon>Hordeinae</taxon>
        <taxon>Hordeum</taxon>
    </lineage>
</organism>
<name>CBP3_HORVU</name>
<sequence length="508" mass="56362">MVTTPRLVSLLLLLALCAAAAGALRLPPDASFPGAQAERLIRALNLLPKDSSSSSGRHGARVGEGNEDVAPGQLLERRVTLPGLPEGVADLGHHAGYYRLPNTHDARMFYFFFESRGKKEDPVVIWLTGGPGCSSELAVFYENGPFTIANNMSLVWNKFGWDKISNIIFVDQPTGTGFSYSSDDRDTRHDETGVSNDLYDFLQVFFKKHPEFIKNDFFITGESYAGHYIPAFASRVHQGNKKNEGTHINLKGFAIGNGLTDPAIQYKAYTDYALEMNLIQKADYERINKFIPPCEFAIKLCGTNGKASCMAAYMVCNTIFNSIMKLVGTKNYYDVRKECEGKLCYDFSNLEKFFGDKAVRQAIGVGDIEFVSCSTSVYQAMLTDWMRNLEVGIPALLEDGINVLIYAGEYDLICNWLGNSRWVHSMEWSGQKDFAKTAESSFLVDDAQAGVLKSHGALSFLKVHNAGHMVPMDQPKAALEMLRRFTQGKLKEAVPEEESSTTSFYAAM</sequence>
<evidence type="ECO:0000250" key="1"/>
<evidence type="ECO:0000255" key="2"/>
<evidence type="ECO:0000255" key="3">
    <source>
        <dbReference type="PROSITE-ProRule" id="PRU10074"/>
    </source>
</evidence>
<evidence type="ECO:0000255" key="4">
    <source>
        <dbReference type="PROSITE-ProRule" id="PRU10075"/>
    </source>
</evidence>
<evidence type="ECO:0000256" key="5">
    <source>
        <dbReference type="SAM" id="MobiDB-lite"/>
    </source>
</evidence>
<evidence type="ECO:0000269" key="6">
    <source>
    </source>
</evidence>
<evidence type="ECO:0000305" key="7"/>
<proteinExistence type="evidence at protein level"/>
<gene>
    <name type="primary">CBP3</name>
    <name type="synonym">CXP;3</name>
</gene>
<comment type="catalytic activity">
    <reaction evidence="3 4">
        <text>Release of a C-terminal amino acid with broad specificity.</text>
        <dbReference type="EC" id="3.4.16.5"/>
    </reaction>
</comment>
<comment type="activity regulation">
    <text>Inhibited by mercuric ions.</text>
</comment>
<comment type="subunit">
    <text>Monomer.</text>
</comment>
<comment type="subcellular location">
    <subcellularLocation>
        <location>Secreted</location>
    </subcellularLocation>
    <text>Secreted into the endosperm.</text>
</comment>
<comment type="developmental stage">
    <text>Expressed mainly in the aleurone and, to a lesser extent in the embryo, throughout the 5-days germination period exclusively, with a maximal level at 3 days. Also found in the roots and shoots of the growing seedling.</text>
</comment>
<comment type="similarity">
    <text evidence="7">Belongs to the peptidase S10 family.</text>
</comment>